<accession>B2FPB2</accession>
<protein>
    <recommendedName>
        <fullName evidence="1">Protein translocase subunit SecA</fullName>
        <ecNumber evidence="1">7.4.2.8</ecNumber>
    </recommendedName>
</protein>
<evidence type="ECO:0000255" key="1">
    <source>
        <dbReference type="HAMAP-Rule" id="MF_01382"/>
    </source>
</evidence>
<evidence type="ECO:0000256" key="2">
    <source>
        <dbReference type="SAM" id="MobiDB-lite"/>
    </source>
</evidence>
<gene>
    <name evidence="1" type="primary">secA</name>
    <name type="ordered locus">Smlt0764</name>
</gene>
<name>SECA_STRMK</name>
<feature type="chain" id="PRO_1000145067" description="Protein translocase subunit SecA">
    <location>
        <begin position="1"/>
        <end position="910"/>
    </location>
</feature>
<feature type="region of interest" description="Disordered" evidence="2">
    <location>
        <begin position="848"/>
        <end position="910"/>
    </location>
</feature>
<feature type="compositionally biased region" description="Low complexity" evidence="2">
    <location>
        <begin position="869"/>
        <end position="880"/>
    </location>
</feature>
<feature type="compositionally biased region" description="Basic residues" evidence="2">
    <location>
        <begin position="900"/>
        <end position="910"/>
    </location>
</feature>
<feature type="binding site" evidence="1">
    <location>
        <position position="87"/>
    </location>
    <ligand>
        <name>ATP</name>
        <dbReference type="ChEBI" id="CHEBI:30616"/>
    </ligand>
</feature>
<feature type="binding site" evidence="1">
    <location>
        <begin position="105"/>
        <end position="109"/>
    </location>
    <ligand>
        <name>ATP</name>
        <dbReference type="ChEBI" id="CHEBI:30616"/>
    </ligand>
</feature>
<feature type="binding site" evidence="1">
    <location>
        <position position="508"/>
    </location>
    <ligand>
        <name>ATP</name>
        <dbReference type="ChEBI" id="CHEBI:30616"/>
    </ligand>
</feature>
<feature type="binding site" evidence="1">
    <location>
        <position position="894"/>
    </location>
    <ligand>
        <name>Zn(2+)</name>
        <dbReference type="ChEBI" id="CHEBI:29105"/>
    </ligand>
</feature>
<feature type="binding site" evidence="1">
    <location>
        <position position="896"/>
    </location>
    <ligand>
        <name>Zn(2+)</name>
        <dbReference type="ChEBI" id="CHEBI:29105"/>
    </ligand>
</feature>
<feature type="binding site" evidence="1">
    <location>
        <position position="905"/>
    </location>
    <ligand>
        <name>Zn(2+)</name>
        <dbReference type="ChEBI" id="CHEBI:29105"/>
    </ligand>
</feature>
<feature type="binding site" evidence="1">
    <location>
        <position position="906"/>
    </location>
    <ligand>
        <name>Zn(2+)</name>
        <dbReference type="ChEBI" id="CHEBI:29105"/>
    </ligand>
</feature>
<proteinExistence type="inferred from homology"/>
<dbReference type="EC" id="7.4.2.8" evidence="1"/>
<dbReference type="EMBL" id="AM743169">
    <property type="protein sequence ID" value="CAQ44341.1"/>
    <property type="molecule type" value="Genomic_DNA"/>
</dbReference>
<dbReference type="RefSeq" id="WP_012479159.1">
    <property type="nucleotide sequence ID" value="NC_010943.1"/>
</dbReference>
<dbReference type="SMR" id="B2FPB2"/>
<dbReference type="EnsemblBacteria" id="CAQ44341">
    <property type="protein sequence ID" value="CAQ44341"/>
    <property type="gene ID" value="Smlt0764"/>
</dbReference>
<dbReference type="KEGG" id="sml:Smlt0764"/>
<dbReference type="PATRIC" id="fig|522373.3.peg.729"/>
<dbReference type="eggNOG" id="COG0653">
    <property type="taxonomic scope" value="Bacteria"/>
</dbReference>
<dbReference type="HOGENOM" id="CLU_005314_3_0_6"/>
<dbReference type="Proteomes" id="UP000008840">
    <property type="component" value="Chromosome"/>
</dbReference>
<dbReference type="GO" id="GO:0031522">
    <property type="term" value="C:cell envelope Sec protein transport complex"/>
    <property type="evidence" value="ECO:0007669"/>
    <property type="project" value="TreeGrafter"/>
</dbReference>
<dbReference type="GO" id="GO:0005829">
    <property type="term" value="C:cytosol"/>
    <property type="evidence" value="ECO:0007669"/>
    <property type="project" value="TreeGrafter"/>
</dbReference>
<dbReference type="GO" id="GO:0005886">
    <property type="term" value="C:plasma membrane"/>
    <property type="evidence" value="ECO:0007669"/>
    <property type="project" value="UniProtKB-SubCell"/>
</dbReference>
<dbReference type="GO" id="GO:0005524">
    <property type="term" value="F:ATP binding"/>
    <property type="evidence" value="ECO:0007669"/>
    <property type="project" value="UniProtKB-UniRule"/>
</dbReference>
<dbReference type="GO" id="GO:0046872">
    <property type="term" value="F:metal ion binding"/>
    <property type="evidence" value="ECO:0007669"/>
    <property type="project" value="UniProtKB-KW"/>
</dbReference>
<dbReference type="GO" id="GO:0008564">
    <property type="term" value="F:protein-exporting ATPase activity"/>
    <property type="evidence" value="ECO:0007669"/>
    <property type="project" value="UniProtKB-EC"/>
</dbReference>
<dbReference type="GO" id="GO:0065002">
    <property type="term" value="P:intracellular protein transmembrane transport"/>
    <property type="evidence" value="ECO:0007669"/>
    <property type="project" value="UniProtKB-UniRule"/>
</dbReference>
<dbReference type="GO" id="GO:0017038">
    <property type="term" value="P:protein import"/>
    <property type="evidence" value="ECO:0007669"/>
    <property type="project" value="InterPro"/>
</dbReference>
<dbReference type="GO" id="GO:0006605">
    <property type="term" value="P:protein targeting"/>
    <property type="evidence" value="ECO:0007669"/>
    <property type="project" value="UniProtKB-UniRule"/>
</dbReference>
<dbReference type="GO" id="GO:0043952">
    <property type="term" value="P:protein transport by the Sec complex"/>
    <property type="evidence" value="ECO:0007669"/>
    <property type="project" value="TreeGrafter"/>
</dbReference>
<dbReference type="CDD" id="cd17928">
    <property type="entry name" value="DEXDc_SecA"/>
    <property type="match status" value="1"/>
</dbReference>
<dbReference type="CDD" id="cd18803">
    <property type="entry name" value="SF2_C_secA"/>
    <property type="match status" value="1"/>
</dbReference>
<dbReference type="FunFam" id="3.40.50.300:FF:000081">
    <property type="entry name" value="Preprotein translocase subunit SecA"/>
    <property type="match status" value="1"/>
</dbReference>
<dbReference type="FunFam" id="3.40.50.300:FF:000113">
    <property type="entry name" value="Preprotein translocase subunit SecA"/>
    <property type="match status" value="1"/>
</dbReference>
<dbReference type="FunFam" id="3.90.1440.10:FF:000001">
    <property type="entry name" value="Preprotein translocase subunit SecA"/>
    <property type="match status" value="1"/>
</dbReference>
<dbReference type="FunFam" id="1.10.3060.10:FF:000003">
    <property type="entry name" value="Protein translocase subunit SecA"/>
    <property type="match status" value="1"/>
</dbReference>
<dbReference type="Gene3D" id="1.10.3060.10">
    <property type="entry name" value="Helical scaffold and wing domains of SecA"/>
    <property type="match status" value="1"/>
</dbReference>
<dbReference type="Gene3D" id="3.40.50.300">
    <property type="entry name" value="P-loop containing nucleotide triphosphate hydrolases"/>
    <property type="match status" value="2"/>
</dbReference>
<dbReference type="Gene3D" id="3.90.1440.10">
    <property type="entry name" value="SecA, preprotein cross-linking domain"/>
    <property type="match status" value="1"/>
</dbReference>
<dbReference type="HAMAP" id="MF_01382">
    <property type="entry name" value="SecA"/>
    <property type="match status" value="1"/>
</dbReference>
<dbReference type="InterPro" id="IPR014001">
    <property type="entry name" value="Helicase_ATP-bd"/>
</dbReference>
<dbReference type="InterPro" id="IPR001650">
    <property type="entry name" value="Helicase_C-like"/>
</dbReference>
<dbReference type="InterPro" id="IPR027417">
    <property type="entry name" value="P-loop_NTPase"/>
</dbReference>
<dbReference type="InterPro" id="IPR004027">
    <property type="entry name" value="SEC_C_motif"/>
</dbReference>
<dbReference type="InterPro" id="IPR000185">
    <property type="entry name" value="SecA"/>
</dbReference>
<dbReference type="InterPro" id="IPR020937">
    <property type="entry name" value="SecA_CS"/>
</dbReference>
<dbReference type="InterPro" id="IPR011115">
    <property type="entry name" value="SecA_DEAD"/>
</dbReference>
<dbReference type="InterPro" id="IPR014018">
    <property type="entry name" value="SecA_motor_DEAD"/>
</dbReference>
<dbReference type="InterPro" id="IPR011130">
    <property type="entry name" value="SecA_preprotein_X-link_dom"/>
</dbReference>
<dbReference type="InterPro" id="IPR044722">
    <property type="entry name" value="SecA_SF2_C"/>
</dbReference>
<dbReference type="InterPro" id="IPR011116">
    <property type="entry name" value="SecA_Wing/Scaffold"/>
</dbReference>
<dbReference type="InterPro" id="IPR036266">
    <property type="entry name" value="SecA_Wing/Scaffold_sf"/>
</dbReference>
<dbReference type="InterPro" id="IPR036670">
    <property type="entry name" value="SecA_X-link_sf"/>
</dbReference>
<dbReference type="NCBIfam" id="NF009538">
    <property type="entry name" value="PRK12904.1"/>
    <property type="match status" value="1"/>
</dbReference>
<dbReference type="NCBIfam" id="TIGR00963">
    <property type="entry name" value="secA"/>
    <property type="match status" value="1"/>
</dbReference>
<dbReference type="PANTHER" id="PTHR30612:SF0">
    <property type="entry name" value="CHLOROPLAST PROTEIN-TRANSPORTING ATPASE"/>
    <property type="match status" value="1"/>
</dbReference>
<dbReference type="PANTHER" id="PTHR30612">
    <property type="entry name" value="SECA INNER MEMBRANE COMPONENT OF SEC PROTEIN SECRETION SYSTEM"/>
    <property type="match status" value="1"/>
</dbReference>
<dbReference type="Pfam" id="PF21090">
    <property type="entry name" value="P-loop_SecA"/>
    <property type="match status" value="1"/>
</dbReference>
<dbReference type="Pfam" id="PF02810">
    <property type="entry name" value="SEC-C"/>
    <property type="match status" value="1"/>
</dbReference>
<dbReference type="Pfam" id="PF07517">
    <property type="entry name" value="SecA_DEAD"/>
    <property type="match status" value="1"/>
</dbReference>
<dbReference type="Pfam" id="PF01043">
    <property type="entry name" value="SecA_PP_bind"/>
    <property type="match status" value="1"/>
</dbReference>
<dbReference type="Pfam" id="PF07516">
    <property type="entry name" value="SecA_SW"/>
    <property type="match status" value="1"/>
</dbReference>
<dbReference type="PRINTS" id="PR00906">
    <property type="entry name" value="SECA"/>
</dbReference>
<dbReference type="SMART" id="SM00957">
    <property type="entry name" value="SecA_DEAD"/>
    <property type="match status" value="1"/>
</dbReference>
<dbReference type="SMART" id="SM00958">
    <property type="entry name" value="SecA_PP_bind"/>
    <property type="match status" value="1"/>
</dbReference>
<dbReference type="SUPFAM" id="SSF81886">
    <property type="entry name" value="Helical scaffold and wing domains of SecA"/>
    <property type="match status" value="1"/>
</dbReference>
<dbReference type="SUPFAM" id="SSF52540">
    <property type="entry name" value="P-loop containing nucleoside triphosphate hydrolases"/>
    <property type="match status" value="2"/>
</dbReference>
<dbReference type="SUPFAM" id="SSF81767">
    <property type="entry name" value="Pre-protein crosslinking domain of SecA"/>
    <property type="match status" value="1"/>
</dbReference>
<dbReference type="PROSITE" id="PS01312">
    <property type="entry name" value="SECA"/>
    <property type="match status" value="1"/>
</dbReference>
<dbReference type="PROSITE" id="PS51196">
    <property type="entry name" value="SECA_MOTOR_DEAD"/>
    <property type="match status" value="1"/>
</dbReference>
<keyword id="KW-0067">ATP-binding</keyword>
<keyword id="KW-0997">Cell inner membrane</keyword>
<keyword id="KW-1003">Cell membrane</keyword>
<keyword id="KW-0963">Cytoplasm</keyword>
<keyword id="KW-0472">Membrane</keyword>
<keyword id="KW-0479">Metal-binding</keyword>
<keyword id="KW-0547">Nucleotide-binding</keyword>
<keyword id="KW-0653">Protein transport</keyword>
<keyword id="KW-1185">Reference proteome</keyword>
<keyword id="KW-1278">Translocase</keyword>
<keyword id="KW-0811">Translocation</keyword>
<keyword id="KW-0813">Transport</keyword>
<keyword id="KW-0862">Zinc</keyword>
<comment type="function">
    <text evidence="1">Part of the Sec protein translocase complex. Interacts with the SecYEG preprotein conducting channel. Has a central role in coupling the hydrolysis of ATP to the transfer of proteins into and across the cell membrane, serving both as a receptor for the preprotein-SecB complex and as an ATP-driven molecular motor driving the stepwise translocation of polypeptide chains across the membrane.</text>
</comment>
<comment type="catalytic activity">
    <reaction evidence="1">
        <text>ATP + H2O + cellular proteinSide 1 = ADP + phosphate + cellular proteinSide 2.</text>
        <dbReference type="EC" id="7.4.2.8"/>
    </reaction>
</comment>
<comment type="cofactor">
    <cofactor evidence="1">
        <name>Zn(2+)</name>
        <dbReference type="ChEBI" id="CHEBI:29105"/>
    </cofactor>
    <text evidence="1">May bind 1 zinc ion per subunit.</text>
</comment>
<comment type="subunit">
    <text evidence="1">Monomer and homodimer. Part of the essential Sec protein translocation apparatus which comprises SecA, SecYEG and auxiliary proteins SecDF-YajC and YidC.</text>
</comment>
<comment type="subcellular location">
    <subcellularLocation>
        <location evidence="1">Cell inner membrane</location>
        <topology evidence="1">Peripheral membrane protein</topology>
        <orientation evidence="1">Cytoplasmic side</orientation>
    </subcellularLocation>
    <subcellularLocation>
        <location evidence="1">Cytoplasm</location>
    </subcellularLocation>
    <text evidence="1">Distribution is 50-50.</text>
</comment>
<comment type="similarity">
    <text evidence="1">Belongs to the SecA family.</text>
</comment>
<reference key="1">
    <citation type="journal article" date="2008" name="Genome Biol.">
        <title>The complete genome, comparative and functional analysis of Stenotrophomonas maltophilia reveals an organism heavily shielded by drug resistance determinants.</title>
        <authorList>
            <person name="Crossman L.C."/>
            <person name="Gould V.C."/>
            <person name="Dow J.M."/>
            <person name="Vernikos G.S."/>
            <person name="Okazaki A."/>
            <person name="Sebaihia M."/>
            <person name="Saunders D."/>
            <person name="Arrowsmith C."/>
            <person name="Carver T."/>
            <person name="Peters N."/>
            <person name="Adlem E."/>
            <person name="Kerhornou A."/>
            <person name="Lord A."/>
            <person name="Murphy L."/>
            <person name="Seeger K."/>
            <person name="Squares R."/>
            <person name="Rutter S."/>
            <person name="Quail M.A."/>
            <person name="Rajandream M.A."/>
            <person name="Harris D."/>
            <person name="Churcher C."/>
            <person name="Bentley S.D."/>
            <person name="Parkhill J."/>
            <person name="Thomson N.R."/>
            <person name="Avison M.B."/>
        </authorList>
    </citation>
    <scope>NUCLEOTIDE SEQUENCE [LARGE SCALE GENOMIC DNA]</scope>
    <source>
        <strain>K279a</strain>
    </source>
</reference>
<sequence>MINSLLTRVFGSRNERQLRQLNRIVAKINALEPEIEKLSDEQLQAKTPEFKQRIADGEALDKVLPEAFAVCREAGRRVLGMRHYDVQLIGGMVLHLGKIAEMRTGEGKTLVATLPVYLNALEGKGVHVVTVNDYLARRDAAQMGKLYNWLGLSVGVVYPGMPHSDKREAYAADITYGTNNEFGFDYLRDNMALSKADRYQRGLHYAIVDEVDSILIDEARTPLIISGPADDSPELYIRVNRVVPHLVKQEAEDGEGDFWVDEKGKQVHLSEAGMEHAEQLLVEAGILNGETEGLYAAQNLTVVHHLNAALRAHAIYQRDVDYIVRDGEVVIVDEFTGRTLAGRRWSDGLHQAVEAKEGVPVQRENQTLASITFQNLFRMYKKLSGMTGTADTEAFEFQSIYGLEVVVIPTNRPTIRKDSPDQVFLNRKGKFNAVLADIEECAKRGQPVLVGTTSIETSEMLSEHLSKAGVKHEVLNAKQHDREATIVANAGRPGAVTIATNMAGRGTDIVLGGSLEAELHALGEDATDEQKAAVKADWQKRHEAVKAAGGLHIVGTERHESRRIDNQLRGRSGRQGDPGSSRFYLALEDNLLRVFGGERVQKMMRMMGMKEEDVIEDRLVTRMIEKSQRKVEAHNFDIRKNLLDFDDVNNDQRKVIYAQRDELLDAESVKDNVDGIRDDVIFDVVARFVPPNSIDEQWDLRGLEATLESDFGLQMSLTDLVKEHEELDAEAIAAKVQERVNQHFAEKEASVGEETMRALEKHVMLTVLDQSWKEHLARMDYLRQGIYLRGYAQKQPKQEYKKEAFELFSDMLENVKREVVTLLSRVRIRSDEEVQALEAAERQQAEARLSQSQFQHQDVGGYSADEEAAQVQAAQQGVAQMQRDEPKIGRNDPCPCGSGKKYKHCHGQLS</sequence>
<organism>
    <name type="scientific">Stenotrophomonas maltophilia (strain K279a)</name>
    <dbReference type="NCBI Taxonomy" id="522373"/>
    <lineage>
        <taxon>Bacteria</taxon>
        <taxon>Pseudomonadati</taxon>
        <taxon>Pseudomonadota</taxon>
        <taxon>Gammaproteobacteria</taxon>
        <taxon>Lysobacterales</taxon>
        <taxon>Lysobacteraceae</taxon>
        <taxon>Stenotrophomonas</taxon>
        <taxon>Stenotrophomonas maltophilia group</taxon>
    </lineage>
</organism>